<sequence length="348" mass="37549">MDDNKKKMLESALKSIDKAFGKGTLVRLGDKEVEKIDSISTGSVGLDIALGIGGVPKGRIVEIYGPESSGKTTLTLHIIAECQKKGGVCAFVDAEHALDVKYAANLGVDVDNLYVSQPDFGEQALDIVETLAKSGAIDLVVVDSVAALTPKSEIEGDMGDQHVGLQARLMSQALRKLTGVVHKMGTTVIFINQIRMKIGQMGYGSPETTTGGNALKFYASVRLDIRRIATLKQNDESIGNRAKVKVVKNKVAPPFKVAEFDIMFGEGISKMGELVDYGVKLDIVDKSGSWFSYKDKKLGQGRENAKIYLKENPKVADEILAAIREQMGSESLSSSSDDDDIKEESGEE</sequence>
<dbReference type="EMBL" id="CP000776">
    <property type="protein sequence ID" value="ABS51665.1"/>
    <property type="molecule type" value="Genomic_DNA"/>
</dbReference>
<dbReference type="RefSeq" id="WP_012109604.1">
    <property type="nucleotide sequence ID" value="NC_009714.1"/>
</dbReference>
<dbReference type="SMR" id="A7I456"/>
<dbReference type="STRING" id="360107.CHAB381_1787"/>
<dbReference type="KEGG" id="cha:CHAB381_1787"/>
<dbReference type="eggNOG" id="COG0468">
    <property type="taxonomic scope" value="Bacteria"/>
</dbReference>
<dbReference type="HOGENOM" id="CLU_040469_3_2_7"/>
<dbReference type="OrthoDB" id="9776733at2"/>
<dbReference type="Proteomes" id="UP000002407">
    <property type="component" value="Chromosome"/>
</dbReference>
<dbReference type="GO" id="GO:0005829">
    <property type="term" value="C:cytosol"/>
    <property type="evidence" value="ECO:0007669"/>
    <property type="project" value="TreeGrafter"/>
</dbReference>
<dbReference type="GO" id="GO:0005524">
    <property type="term" value="F:ATP binding"/>
    <property type="evidence" value="ECO:0007669"/>
    <property type="project" value="UniProtKB-UniRule"/>
</dbReference>
<dbReference type="GO" id="GO:0016887">
    <property type="term" value="F:ATP hydrolysis activity"/>
    <property type="evidence" value="ECO:0007669"/>
    <property type="project" value="InterPro"/>
</dbReference>
<dbReference type="GO" id="GO:0140664">
    <property type="term" value="F:ATP-dependent DNA damage sensor activity"/>
    <property type="evidence" value="ECO:0007669"/>
    <property type="project" value="InterPro"/>
</dbReference>
<dbReference type="GO" id="GO:0003684">
    <property type="term" value="F:damaged DNA binding"/>
    <property type="evidence" value="ECO:0007669"/>
    <property type="project" value="UniProtKB-UniRule"/>
</dbReference>
<dbReference type="GO" id="GO:0003697">
    <property type="term" value="F:single-stranded DNA binding"/>
    <property type="evidence" value="ECO:0007669"/>
    <property type="project" value="UniProtKB-UniRule"/>
</dbReference>
<dbReference type="GO" id="GO:0006310">
    <property type="term" value="P:DNA recombination"/>
    <property type="evidence" value="ECO:0007669"/>
    <property type="project" value="UniProtKB-UniRule"/>
</dbReference>
<dbReference type="GO" id="GO:0006281">
    <property type="term" value="P:DNA repair"/>
    <property type="evidence" value="ECO:0007669"/>
    <property type="project" value="UniProtKB-UniRule"/>
</dbReference>
<dbReference type="GO" id="GO:0009432">
    <property type="term" value="P:SOS response"/>
    <property type="evidence" value="ECO:0007669"/>
    <property type="project" value="UniProtKB-UniRule"/>
</dbReference>
<dbReference type="CDD" id="cd00983">
    <property type="entry name" value="RecA"/>
    <property type="match status" value="1"/>
</dbReference>
<dbReference type="FunFam" id="3.40.50.300:FF:000087">
    <property type="entry name" value="Recombinase RecA"/>
    <property type="match status" value="1"/>
</dbReference>
<dbReference type="Gene3D" id="3.40.50.300">
    <property type="entry name" value="P-loop containing nucleotide triphosphate hydrolases"/>
    <property type="match status" value="1"/>
</dbReference>
<dbReference type="HAMAP" id="MF_00268">
    <property type="entry name" value="RecA"/>
    <property type="match status" value="1"/>
</dbReference>
<dbReference type="InterPro" id="IPR003593">
    <property type="entry name" value="AAA+_ATPase"/>
</dbReference>
<dbReference type="InterPro" id="IPR013765">
    <property type="entry name" value="DNA_recomb/repair_RecA"/>
</dbReference>
<dbReference type="InterPro" id="IPR020584">
    <property type="entry name" value="DNA_recomb/repair_RecA_CS"/>
</dbReference>
<dbReference type="InterPro" id="IPR027417">
    <property type="entry name" value="P-loop_NTPase"/>
</dbReference>
<dbReference type="InterPro" id="IPR049261">
    <property type="entry name" value="RecA-like_C"/>
</dbReference>
<dbReference type="InterPro" id="IPR049428">
    <property type="entry name" value="RecA-like_N"/>
</dbReference>
<dbReference type="InterPro" id="IPR020588">
    <property type="entry name" value="RecA_ATP-bd"/>
</dbReference>
<dbReference type="InterPro" id="IPR023400">
    <property type="entry name" value="RecA_C_sf"/>
</dbReference>
<dbReference type="InterPro" id="IPR020587">
    <property type="entry name" value="RecA_monomer-monomer_interface"/>
</dbReference>
<dbReference type="NCBIfam" id="TIGR02012">
    <property type="entry name" value="tigrfam_recA"/>
    <property type="match status" value="1"/>
</dbReference>
<dbReference type="PANTHER" id="PTHR45900:SF1">
    <property type="entry name" value="MITOCHONDRIAL DNA REPAIR PROTEIN RECA HOMOLOG-RELATED"/>
    <property type="match status" value="1"/>
</dbReference>
<dbReference type="PANTHER" id="PTHR45900">
    <property type="entry name" value="RECA"/>
    <property type="match status" value="1"/>
</dbReference>
<dbReference type="Pfam" id="PF00154">
    <property type="entry name" value="RecA"/>
    <property type="match status" value="1"/>
</dbReference>
<dbReference type="Pfam" id="PF21096">
    <property type="entry name" value="RecA_C"/>
    <property type="match status" value="1"/>
</dbReference>
<dbReference type="PRINTS" id="PR00142">
    <property type="entry name" value="RECA"/>
</dbReference>
<dbReference type="SMART" id="SM00382">
    <property type="entry name" value="AAA"/>
    <property type="match status" value="1"/>
</dbReference>
<dbReference type="SUPFAM" id="SSF52540">
    <property type="entry name" value="P-loop containing nucleoside triphosphate hydrolases"/>
    <property type="match status" value="1"/>
</dbReference>
<dbReference type="SUPFAM" id="SSF54752">
    <property type="entry name" value="RecA protein, C-terminal domain"/>
    <property type="match status" value="1"/>
</dbReference>
<dbReference type="PROSITE" id="PS00321">
    <property type="entry name" value="RECA_1"/>
    <property type="match status" value="1"/>
</dbReference>
<dbReference type="PROSITE" id="PS50162">
    <property type="entry name" value="RECA_2"/>
    <property type="match status" value="1"/>
</dbReference>
<dbReference type="PROSITE" id="PS50163">
    <property type="entry name" value="RECA_3"/>
    <property type="match status" value="1"/>
</dbReference>
<protein>
    <recommendedName>
        <fullName evidence="1">Protein RecA</fullName>
    </recommendedName>
    <alternativeName>
        <fullName evidence="1">Recombinase A</fullName>
    </alternativeName>
</protein>
<comment type="function">
    <text evidence="1">Can catalyze the hydrolysis of ATP in the presence of single-stranded DNA, the ATP-dependent uptake of single-stranded DNA by duplex DNA, and the ATP-dependent hybridization of homologous single-stranded DNAs. It interacts with LexA causing its activation and leading to its autocatalytic cleavage.</text>
</comment>
<comment type="subcellular location">
    <subcellularLocation>
        <location evidence="1">Cytoplasm</location>
    </subcellularLocation>
</comment>
<comment type="similarity">
    <text evidence="1">Belongs to the RecA family.</text>
</comment>
<accession>A7I456</accession>
<name>RECA_CAMHC</name>
<reference key="1">
    <citation type="submission" date="2007-07" db="EMBL/GenBank/DDBJ databases">
        <title>Complete genome sequence of Campylobacter hominis ATCC BAA-381, a commensal isolated from the human gastrointestinal tract.</title>
        <authorList>
            <person name="Fouts D.E."/>
            <person name="Mongodin E.F."/>
            <person name="Puiu D."/>
            <person name="Sebastian Y."/>
            <person name="Miller W.G."/>
            <person name="Mandrell R.E."/>
            <person name="Nelson K.E."/>
        </authorList>
    </citation>
    <scope>NUCLEOTIDE SEQUENCE [LARGE SCALE GENOMIC DNA]</scope>
    <source>
        <strain>ATCC BAA-381 / DSM 21671 / CCUG 45161 / LMG 19568 / NCTC 13146 / CH001A</strain>
    </source>
</reference>
<gene>
    <name evidence="1" type="primary">recA</name>
    <name type="ordered locus">CHAB381_1787</name>
</gene>
<proteinExistence type="inferred from homology"/>
<feature type="chain" id="PRO_1000047896" description="Protein RecA">
    <location>
        <begin position="1"/>
        <end position="348"/>
    </location>
</feature>
<feature type="region of interest" description="Disordered" evidence="2">
    <location>
        <begin position="326"/>
        <end position="348"/>
    </location>
</feature>
<feature type="compositionally biased region" description="Acidic residues" evidence="2">
    <location>
        <begin position="336"/>
        <end position="348"/>
    </location>
</feature>
<feature type="binding site" evidence="1">
    <location>
        <begin position="65"/>
        <end position="72"/>
    </location>
    <ligand>
        <name>ATP</name>
        <dbReference type="ChEBI" id="CHEBI:30616"/>
    </ligand>
</feature>
<keyword id="KW-0067">ATP-binding</keyword>
<keyword id="KW-0963">Cytoplasm</keyword>
<keyword id="KW-0227">DNA damage</keyword>
<keyword id="KW-0233">DNA recombination</keyword>
<keyword id="KW-0234">DNA repair</keyword>
<keyword id="KW-0238">DNA-binding</keyword>
<keyword id="KW-0547">Nucleotide-binding</keyword>
<keyword id="KW-1185">Reference proteome</keyword>
<keyword id="KW-0742">SOS response</keyword>
<organism>
    <name type="scientific">Campylobacter hominis (strain ATCC BAA-381 / DSM 21671 / CCUG 45161 / LMG 19568 / NCTC 13146 / CH001A)</name>
    <dbReference type="NCBI Taxonomy" id="360107"/>
    <lineage>
        <taxon>Bacteria</taxon>
        <taxon>Pseudomonadati</taxon>
        <taxon>Campylobacterota</taxon>
        <taxon>Epsilonproteobacteria</taxon>
        <taxon>Campylobacterales</taxon>
        <taxon>Campylobacteraceae</taxon>
        <taxon>Campylobacter</taxon>
    </lineage>
</organism>
<evidence type="ECO:0000255" key="1">
    <source>
        <dbReference type="HAMAP-Rule" id="MF_00268"/>
    </source>
</evidence>
<evidence type="ECO:0000256" key="2">
    <source>
        <dbReference type="SAM" id="MobiDB-lite"/>
    </source>
</evidence>